<gene>
    <name evidence="1" type="primary">rpl14</name>
</gene>
<accession>A6H5L8</accession>
<sequence>MIQPQTYSNVADNSGARKLMCIRVLKASNRQYAHIGDVIIAIIKEAVPNMPLKESEIVRAVVVRTCKELKRDNGMIIRSDDNAAVIVDQEGNPRGTRVFGSVARELRQLNFAKIVSLAPEVL</sequence>
<comment type="function">
    <text evidence="1">Binds to 23S rRNA.</text>
</comment>
<comment type="subunit">
    <text evidence="1">Part of the 50S ribosomal subunit.</text>
</comment>
<comment type="subcellular location">
    <subcellularLocation>
        <location>Plastid</location>
        <location>Chloroplast</location>
    </subcellularLocation>
</comment>
<comment type="similarity">
    <text evidence="1">Belongs to the universal ribosomal protein uL14 family.</text>
</comment>
<evidence type="ECO:0000255" key="1">
    <source>
        <dbReference type="HAMAP-Rule" id="MF_01367"/>
    </source>
</evidence>
<evidence type="ECO:0000305" key="2"/>
<protein>
    <recommendedName>
        <fullName evidence="1">Large ribosomal subunit protein uL14c</fullName>
    </recommendedName>
    <alternativeName>
        <fullName evidence="2">50S ribosomal protein L14, chloroplastic</fullName>
    </alternativeName>
</protein>
<geneLocation type="chloroplast"/>
<feature type="chain" id="PRO_0000355876" description="Large ribosomal subunit protein uL14c">
    <location>
        <begin position="1"/>
        <end position="122"/>
    </location>
</feature>
<keyword id="KW-0150">Chloroplast</keyword>
<keyword id="KW-0934">Plastid</keyword>
<keyword id="KW-0687">Ribonucleoprotein</keyword>
<keyword id="KW-0689">Ribosomal protein</keyword>
<keyword id="KW-0694">RNA-binding</keyword>
<keyword id="KW-0699">rRNA-binding</keyword>
<dbReference type="EMBL" id="AP009339">
    <property type="protein sequence ID" value="BAF64984.1"/>
    <property type="molecule type" value="Genomic_DNA"/>
</dbReference>
<dbReference type="RefSeq" id="YP_001312243.1">
    <property type="nucleotide sequence ID" value="NC_009618.1"/>
</dbReference>
<dbReference type="SMR" id="A6H5L8"/>
<dbReference type="GeneID" id="5309592"/>
<dbReference type="GO" id="GO:0009507">
    <property type="term" value="C:chloroplast"/>
    <property type="evidence" value="ECO:0007669"/>
    <property type="project" value="UniProtKB-SubCell"/>
</dbReference>
<dbReference type="GO" id="GO:0022625">
    <property type="term" value="C:cytosolic large ribosomal subunit"/>
    <property type="evidence" value="ECO:0007669"/>
    <property type="project" value="TreeGrafter"/>
</dbReference>
<dbReference type="GO" id="GO:0070180">
    <property type="term" value="F:large ribosomal subunit rRNA binding"/>
    <property type="evidence" value="ECO:0007669"/>
    <property type="project" value="TreeGrafter"/>
</dbReference>
<dbReference type="GO" id="GO:0003735">
    <property type="term" value="F:structural constituent of ribosome"/>
    <property type="evidence" value="ECO:0007669"/>
    <property type="project" value="InterPro"/>
</dbReference>
<dbReference type="GO" id="GO:0006412">
    <property type="term" value="P:translation"/>
    <property type="evidence" value="ECO:0007669"/>
    <property type="project" value="UniProtKB-UniRule"/>
</dbReference>
<dbReference type="CDD" id="cd00337">
    <property type="entry name" value="Ribosomal_uL14"/>
    <property type="match status" value="1"/>
</dbReference>
<dbReference type="FunFam" id="2.40.150.20:FF:000002">
    <property type="entry name" value="50S ribosomal protein L14, chloroplastic"/>
    <property type="match status" value="1"/>
</dbReference>
<dbReference type="Gene3D" id="2.40.150.20">
    <property type="entry name" value="Ribosomal protein L14"/>
    <property type="match status" value="1"/>
</dbReference>
<dbReference type="HAMAP" id="MF_01367">
    <property type="entry name" value="Ribosomal_uL14"/>
    <property type="match status" value="1"/>
</dbReference>
<dbReference type="InterPro" id="IPR000218">
    <property type="entry name" value="Ribosomal_uL14"/>
</dbReference>
<dbReference type="InterPro" id="IPR005745">
    <property type="entry name" value="Ribosomal_uL14_bac-type"/>
</dbReference>
<dbReference type="InterPro" id="IPR036853">
    <property type="entry name" value="Ribosomal_uL14_sf"/>
</dbReference>
<dbReference type="NCBIfam" id="TIGR01067">
    <property type="entry name" value="rplN_bact"/>
    <property type="match status" value="1"/>
</dbReference>
<dbReference type="PANTHER" id="PTHR11761">
    <property type="entry name" value="50S/60S RIBOSOMAL PROTEIN L14/L23"/>
    <property type="match status" value="1"/>
</dbReference>
<dbReference type="PANTHER" id="PTHR11761:SF3">
    <property type="entry name" value="LARGE RIBOSOMAL SUBUNIT PROTEIN UL14M"/>
    <property type="match status" value="1"/>
</dbReference>
<dbReference type="Pfam" id="PF00238">
    <property type="entry name" value="Ribosomal_L14"/>
    <property type="match status" value="1"/>
</dbReference>
<dbReference type="SMART" id="SM01374">
    <property type="entry name" value="Ribosomal_L14"/>
    <property type="match status" value="1"/>
</dbReference>
<dbReference type="SUPFAM" id="SSF50193">
    <property type="entry name" value="Ribosomal protein L14"/>
    <property type="match status" value="1"/>
</dbReference>
<reference key="1">
    <citation type="journal article" date="2007" name="Mol. Biol. Evol.">
        <title>Chloroplast genome (cpDNA) of Cycas taitungensis and 56 cp protein-coding genes of Gnetum parvifolium: insights into cpDNA evolution and phylogeny of extant seed plants.</title>
        <authorList>
            <person name="Wu C.-S."/>
            <person name="Wang Y.-N."/>
            <person name="Liu S.-M."/>
            <person name="Chaw S.-M."/>
        </authorList>
    </citation>
    <scope>NUCLEOTIDE SEQUENCE [LARGE SCALE GENOMIC DNA]</scope>
</reference>
<proteinExistence type="inferred from homology"/>
<organism>
    <name type="scientific">Cycas taitungensis</name>
    <name type="common">Prince sago</name>
    <name type="synonym">Cycas taiwaniana</name>
    <dbReference type="NCBI Taxonomy" id="54799"/>
    <lineage>
        <taxon>Eukaryota</taxon>
        <taxon>Viridiplantae</taxon>
        <taxon>Streptophyta</taxon>
        <taxon>Embryophyta</taxon>
        <taxon>Tracheophyta</taxon>
        <taxon>Spermatophyta</taxon>
        <taxon>Cycadidae</taxon>
        <taxon>Cycadales</taxon>
        <taxon>Cycadaceae</taxon>
        <taxon>Cycas</taxon>
    </lineage>
</organism>
<name>RK14_CYCTA</name>